<name>PEPA1_RABIT</name>
<protein>
    <recommendedName>
        <fullName>Pepsin II-1</fullName>
        <ecNumber>3.4.23.1</ecNumber>
    </recommendedName>
    <alternativeName>
        <fullName>Pepsin A</fullName>
    </alternativeName>
</protein>
<proteinExistence type="evidence at transcript level"/>
<accession>P28712</accession>
<accession>Q54A54</accession>
<evidence type="ECO:0000250" key="1"/>
<evidence type="ECO:0000250" key="2">
    <source>
        <dbReference type="UniProtKB" id="P03954"/>
    </source>
</evidence>
<evidence type="ECO:0000255" key="3">
    <source>
        <dbReference type="PROSITE-ProRule" id="PRU01103"/>
    </source>
</evidence>
<evidence type="ECO:0000255" key="4">
    <source>
        <dbReference type="PROSITE-ProRule" id="PRU10094"/>
    </source>
</evidence>
<evidence type="ECO:0000305" key="5"/>
<reference key="1">
    <citation type="journal article" date="1990" name="J. Biol. Chem.">
        <title>Structure and development of rabbit pepsinogens. Stage-specific zymogens, nucleotide sequences of cDNAs, molecular evolution, and gene expression during development.</title>
        <authorList>
            <person name="Kageyama T."/>
            <person name="Tanabe K."/>
            <person name="Koiwai O."/>
        </authorList>
    </citation>
    <scope>NUCLEOTIDE SEQUENCE [MRNA]</scope>
    <source>
        <strain>Japanese white</strain>
        <tissue>Stomach</tissue>
    </source>
</reference>
<sequence length="387" mass="42071">MKWLLLLGLLALSECIVHKVPLVRKKSLRKNLIEKGLLQDYLKTHTPNLATKYFPKETFASVSTESLENYLDAEYFGTISIGTPPQEFTVIFDTGSSNLWVPSTYCSSLACFLHKRFNPDDSSTFQATSETLSITYGTGSMTGILGYDTVKVGNIEDTNQIFGLSKTEPGITFLVAPFDGILGLAYPSISASDATPVFDNMWNEGLVSEDLFSVYLSSNGEKGSMVMFGGIDSSYYTGSLNWVPVSHEGYWQITMDSITINGETIACADSCQAVVDTGTSLLAGPTSAISKIQSYIGASKNLLGENIISCSAIDSLPDIVFTINNVQYPLPASAYILKEDDDCLSGFDGMNLDTSYGELWILGDVFIRQYFTVFDRANNQVGLAAAA</sequence>
<feature type="signal peptide">
    <location>
        <begin position="1"/>
        <end position="15"/>
    </location>
</feature>
<feature type="propeptide" id="PRO_0000026028" description="Activation peptide">
    <location>
        <begin position="16"/>
        <end position="59"/>
    </location>
</feature>
<feature type="chain" id="PRO_0000026029" description="Pepsin II-1">
    <location>
        <begin position="60"/>
        <end position="387"/>
    </location>
</feature>
<feature type="domain" description="Peptidase A1" evidence="3">
    <location>
        <begin position="75"/>
        <end position="384"/>
    </location>
</feature>
<feature type="active site" evidence="4">
    <location>
        <position position="93"/>
    </location>
</feature>
<feature type="active site" evidence="4">
    <location>
        <position position="276"/>
    </location>
</feature>
<feature type="modified residue" description="Phosphoserine" evidence="2">
    <location>
        <position position="129"/>
    </location>
</feature>
<feature type="disulfide bond" evidence="1">
    <location>
        <begin position="106"/>
        <end position="111"/>
    </location>
</feature>
<feature type="disulfide bond" evidence="1">
    <location>
        <begin position="267"/>
        <end position="271"/>
    </location>
</feature>
<feature type="disulfide bond" evidence="1">
    <location>
        <begin position="310"/>
        <end position="343"/>
    </location>
</feature>
<dbReference type="EC" id="3.4.23.1"/>
<dbReference type="EMBL" id="AB089790">
    <property type="protein sequence ID" value="BAC07514.1"/>
    <property type="molecule type" value="mRNA"/>
</dbReference>
<dbReference type="PIR" id="B38302">
    <property type="entry name" value="B38302"/>
</dbReference>
<dbReference type="RefSeq" id="NP_001164549.1">
    <property type="nucleotide sequence ID" value="NM_001171078.1"/>
</dbReference>
<dbReference type="SMR" id="P28712"/>
<dbReference type="STRING" id="9986.ENSOCUP00000005828"/>
<dbReference type="MEROPS" id="A01.001"/>
<dbReference type="PaxDb" id="9986-ENSOCUP00000015402"/>
<dbReference type="Ensembl" id="ENSOCUT00000006740.3">
    <property type="protein sequence ID" value="ENSOCUP00000005828.2"/>
    <property type="gene ID" value="ENSOCUG00000023022.2"/>
</dbReference>
<dbReference type="GeneID" id="100328619"/>
<dbReference type="KEGG" id="ocu:100328619"/>
<dbReference type="eggNOG" id="KOG1339">
    <property type="taxonomic scope" value="Eukaryota"/>
</dbReference>
<dbReference type="GeneTree" id="ENSGT00940000155036"/>
<dbReference type="HOGENOM" id="CLU_013253_3_0_1"/>
<dbReference type="InParanoid" id="P28712"/>
<dbReference type="OrthoDB" id="9528103at2759"/>
<dbReference type="Proteomes" id="UP000001811">
    <property type="component" value="Unplaced"/>
</dbReference>
<dbReference type="Bgee" id="ENSOCUG00000023022">
    <property type="expression patterns" value="Expressed in smooth muscle tissue and 2 other cell types or tissues"/>
</dbReference>
<dbReference type="GO" id="GO:0005576">
    <property type="term" value="C:extracellular region"/>
    <property type="evidence" value="ECO:0007669"/>
    <property type="project" value="UniProtKB-SubCell"/>
</dbReference>
<dbReference type="GO" id="GO:0004190">
    <property type="term" value="F:aspartic-type endopeptidase activity"/>
    <property type="evidence" value="ECO:0007669"/>
    <property type="project" value="UniProtKB-KW"/>
</dbReference>
<dbReference type="GO" id="GO:0007586">
    <property type="term" value="P:digestion"/>
    <property type="evidence" value="ECO:0007669"/>
    <property type="project" value="UniProtKB-KW"/>
</dbReference>
<dbReference type="GO" id="GO:0006508">
    <property type="term" value="P:proteolysis"/>
    <property type="evidence" value="ECO:0007669"/>
    <property type="project" value="UniProtKB-KW"/>
</dbReference>
<dbReference type="CDD" id="cd05478">
    <property type="entry name" value="pepsin_A"/>
    <property type="match status" value="1"/>
</dbReference>
<dbReference type="FunFam" id="2.40.70.10:FF:000006">
    <property type="entry name" value="Cathepsin E"/>
    <property type="match status" value="1"/>
</dbReference>
<dbReference type="FunFam" id="2.40.70.10:FF:000004">
    <property type="entry name" value="Pepsin A"/>
    <property type="match status" value="1"/>
</dbReference>
<dbReference type="Gene3D" id="6.10.140.60">
    <property type="match status" value="1"/>
</dbReference>
<dbReference type="Gene3D" id="2.40.70.10">
    <property type="entry name" value="Acid Proteases"/>
    <property type="match status" value="2"/>
</dbReference>
<dbReference type="InterPro" id="IPR001461">
    <property type="entry name" value="Aspartic_peptidase_A1"/>
</dbReference>
<dbReference type="InterPro" id="IPR001969">
    <property type="entry name" value="Aspartic_peptidase_AS"/>
</dbReference>
<dbReference type="InterPro" id="IPR012848">
    <property type="entry name" value="Aspartic_peptidase_N"/>
</dbReference>
<dbReference type="InterPro" id="IPR034162">
    <property type="entry name" value="Pepsin_A"/>
</dbReference>
<dbReference type="InterPro" id="IPR033121">
    <property type="entry name" value="PEPTIDASE_A1"/>
</dbReference>
<dbReference type="InterPro" id="IPR021109">
    <property type="entry name" value="Peptidase_aspartic_dom_sf"/>
</dbReference>
<dbReference type="PANTHER" id="PTHR47966">
    <property type="entry name" value="BETA-SITE APP-CLEAVING ENZYME, ISOFORM A-RELATED"/>
    <property type="match status" value="1"/>
</dbReference>
<dbReference type="PANTHER" id="PTHR47966:SF22">
    <property type="entry name" value="PEPSIN A-3-RELATED"/>
    <property type="match status" value="1"/>
</dbReference>
<dbReference type="Pfam" id="PF07966">
    <property type="entry name" value="A1_Propeptide"/>
    <property type="match status" value="1"/>
</dbReference>
<dbReference type="Pfam" id="PF00026">
    <property type="entry name" value="Asp"/>
    <property type="match status" value="1"/>
</dbReference>
<dbReference type="PRINTS" id="PR00792">
    <property type="entry name" value="PEPSIN"/>
</dbReference>
<dbReference type="SUPFAM" id="SSF50630">
    <property type="entry name" value="Acid proteases"/>
    <property type="match status" value="1"/>
</dbReference>
<dbReference type="PROSITE" id="PS00141">
    <property type="entry name" value="ASP_PROTEASE"/>
    <property type="match status" value="2"/>
</dbReference>
<dbReference type="PROSITE" id="PS51767">
    <property type="entry name" value="PEPTIDASE_A1"/>
    <property type="match status" value="1"/>
</dbReference>
<keyword id="KW-0064">Aspartyl protease</keyword>
<keyword id="KW-0222">Digestion</keyword>
<keyword id="KW-1015">Disulfide bond</keyword>
<keyword id="KW-0378">Hydrolase</keyword>
<keyword id="KW-0597">Phosphoprotein</keyword>
<keyword id="KW-0645">Protease</keyword>
<keyword id="KW-1185">Reference proteome</keyword>
<keyword id="KW-0964">Secreted</keyword>
<keyword id="KW-0732">Signal</keyword>
<keyword id="KW-0865">Zymogen</keyword>
<comment type="function">
    <text>Shows particularly broad specificity; although bonds involving phenylalanine and leucine are preferred, many others are also cleaved to some extent.</text>
</comment>
<comment type="catalytic activity">
    <reaction evidence="4">
        <text>Preferential cleavage: hydrophobic, preferably aromatic, residues in P1 and P1' positions. Cleaves 1-Phe-|-Val-2, 4-Gln-|-His-5, 13-Glu-|-Ala-14, 14-Ala-|-Leu-15, 15-Leu-|-Tyr-16, 16-Tyr-|-Leu-17, 23-Gly-|-Phe-24, 24-Phe-|-Phe-25 and 25-Phe-|-Tyr-26 bonds in the B chain of insulin.</text>
        <dbReference type="EC" id="3.4.23.1"/>
    </reaction>
</comment>
<comment type="subcellular location">
    <subcellularLocation>
        <location>Secreted</location>
    </subcellularLocation>
</comment>
<comment type="developmental stage">
    <text>Pepsinogens in group I, II, and III where the predominant zymogens at late postnatal stage.</text>
</comment>
<comment type="similarity">
    <text evidence="5">Belongs to the peptidase A1 family.</text>
</comment>
<organism>
    <name type="scientific">Oryctolagus cuniculus</name>
    <name type="common">Rabbit</name>
    <dbReference type="NCBI Taxonomy" id="9986"/>
    <lineage>
        <taxon>Eukaryota</taxon>
        <taxon>Metazoa</taxon>
        <taxon>Chordata</taxon>
        <taxon>Craniata</taxon>
        <taxon>Vertebrata</taxon>
        <taxon>Euteleostomi</taxon>
        <taxon>Mammalia</taxon>
        <taxon>Eutheria</taxon>
        <taxon>Euarchontoglires</taxon>
        <taxon>Glires</taxon>
        <taxon>Lagomorpha</taxon>
        <taxon>Leporidae</taxon>
        <taxon>Oryctolagus</taxon>
    </lineage>
</organism>